<proteinExistence type="evidence at protein level"/>
<feature type="chain" id="PRO_0000073136" description="Ovomucoid">
    <location>
        <begin position="1" status="less than"/>
        <end position="56" status="greater than"/>
    </location>
</feature>
<feature type="domain" description="Kazal-like" evidence="1">
    <location>
        <begin position="6"/>
        <end position="56"/>
    </location>
</feature>
<feature type="site" description="Reactive bond 3">
    <location>
        <begin position="18"/>
        <end position="19"/>
    </location>
</feature>
<feature type="glycosylation site" description="N-linked (GlcNAc...) asparagine">
    <location>
        <position position="45"/>
    </location>
</feature>
<feature type="disulfide bond">
    <location>
        <begin position="8"/>
        <end position="38"/>
    </location>
</feature>
<feature type="disulfide bond">
    <location>
        <begin position="16"/>
        <end position="35"/>
    </location>
</feature>
<feature type="disulfide bond">
    <location>
        <begin position="24"/>
        <end position="56"/>
    </location>
</feature>
<feature type="non-terminal residue">
    <location>
        <position position="1"/>
    </location>
</feature>
<feature type="non-terminal residue">
    <location>
        <position position="56"/>
    </location>
</feature>
<reference key="1">
    <citation type="journal article" date="1987" name="Biochemistry">
        <title>Ovomucoid third domains from 100 avian species: isolation, sequences, and hypervariability of enzyme-inhibitor contact residues.</title>
        <authorList>
            <person name="Laskowski M. Jr."/>
            <person name="Kato I."/>
            <person name="Ardelt W."/>
            <person name="Cook J."/>
            <person name="Denton A."/>
            <person name="Empie M.W."/>
            <person name="Kohr W.J."/>
            <person name="Park S.J."/>
            <person name="Parks K."/>
            <person name="Schatzley B.L."/>
            <person name="Schoenberger O.L."/>
            <person name="Tashiro M."/>
            <person name="Vichot G."/>
            <person name="Whatley H.E."/>
            <person name="Wieczorek A."/>
            <person name="Wieczorek M."/>
        </authorList>
    </citation>
    <scope>PROTEIN SEQUENCE</scope>
</reference>
<protein>
    <recommendedName>
        <fullName>Ovomucoid</fullName>
    </recommendedName>
</protein>
<name>IOVO_LOPIM</name>
<sequence length="56" mass="6039">LAAVSVDCSEYPKPACTMEYRPLCGSDNKTYGNKCNFCNAVVESNGTLTLSHFGKC</sequence>
<accession>P67950</accession>
<accession>P05586</accession>
<evidence type="ECO:0000255" key="1">
    <source>
        <dbReference type="PROSITE-ProRule" id="PRU00798"/>
    </source>
</evidence>
<keyword id="KW-0903">Direct protein sequencing</keyword>
<keyword id="KW-1015">Disulfide bond</keyword>
<keyword id="KW-0325">Glycoprotein</keyword>
<keyword id="KW-0646">Protease inhibitor</keyword>
<keyword id="KW-0677">Repeat</keyword>
<keyword id="KW-0964">Secreted</keyword>
<keyword id="KW-0722">Serine protease inhibitor</keyword>
<dbReference type="PIR" id="F31441">
    <property type="entry name" value="F31441"/>
</dbReference>
<dbReference type="SMR" id="P67950"/>
<dbReference type="GO" id="GO:0005615">
    <property type="term" value="C:extracellular space"/>
    <property type="evidence" value="ECO:0007669"/>
    <property type="project" value="UniProtKB-ARBA"/>
</dbReference>
<dbReference type="GO" id="GO:0004867">
    <property type="term" value="F:serine-type endopeptidase inhibitor activity"/>
    <property type="evidence" value="ECO:0007669"/>
    <property type="project" value="UniProtKB-KW"/>
</dbReference>
<dbReference type="CDD" id="cd00104">
    <property type="entry name" value="KAZAL_FS"/>
    <property type="match status" value="1"/>
</dbReference>
<dbReference type="FunFam" id="3.30.60.30:FF:000037">
    <property type="entry name" value="Ovomucoid"/>
    <property type="match status" value="1"/>
</dbReference>
<dbReference type="Gene3D" id="3.30.60.30">
    <property type="match status" value="1"/>
</dbReference>
<dbReference type="InterPro" id="IPR051597">
    <property type="entry name" value="Bifunctional_prot_inhibitor"/>
</dbReference>
<dbReference type="InterPro" id="IPR002350">
    <property type="entry name" value="Kazal_dom"/>
</dbReference>
<dbReference type="InterPro" id="IPR036058">
    <property type="entry name" value="Kazal_dom_sf"/>
</dbReference>
<dbReference type="InterPro" id="IPR001239">
    <property type="entry name" value="Prot_inh_Kazal-m"/>
</dbReference>
<dbReference type="PANTHER" id="PTHR47729:SF1">
    <property type="entry name" value="OVOMUCOID-LIKE-RELATED"/>
    <property type="match status" value="1"/>
</dbReference>
<dbReference type="PANTHER" id="PTHR47729">
    <property type="entry name" value="SERINE PEPTIDASE INHIBITOR, KAZAL TYPE 2, TANDEM DUPLICATE 1-RELATED"/>
    <property type="match status" value="1"/>
</dbReference>
<dbReference type="Pfam" id="PF00050">
    <property type="entry name" value="Kazal_1"/>
    <property type="match status" value="1"/>
</dbReference>
<dbReference type="PRINTS" id="PR00290">
    <property type="entry name" value="KAZALINHBTR"/>
</dbReference>
<dbReference type="SMART" id="SM00280">
    <property type="entry name" value="KAZAL"/>
    <property type="match status" value="1"/>
</dbReference>
<dbReference type="SUPFAM" id="SSF100895">
    <property type="entry name" value="Kazal-type serine protease inhibitors"/>
    <property type="match status" value="1"/>
</dbReference>
<dbReference type="PROSITE" id="PS00282">
    <property type="entry name" value="KAZAL_1"/>
    <property type="match status" value="1"/>
</dbReference>
<dbReference type="PROSITE" id="PS51465">
    <property type="entry name" value="KAZAL_2"/>
    <property type="match status" value="1"/>
</dbReference>
<organism>
    <name type="scientific">Lophophorus impejanus</name>
    <name type="common">Himalayan monal pheasant</name>
    <name type="synonym">Phasianus impejanus</name>
    <dbReference type="NCBI Taxonomy" id="9040"/>
    <lineage>
        <taxon>Eukaryota</taxon>
        <taxon>Metazoa</taxon>
        <taxon>Chordata</taxon>
        <taxon>Craniata</taxon>
        <taxon>Vertebrata</taxon>
        <taxon>Euteleostomi</taxon>
        <taxon>Archelosauria</taxon>
        <taxon>Archosauria</taxon>
        <taxon>Dinosauria</taxon>
        <taxon>Saurischia</taxon>
        <taxon>Theropoda</taxon>
        <taxon>Coelurosauria</taxon>
        <taxon>Aves</taxon>
        <taxon>Neognathae</taxon>
        <taxon>Galloanserae</taxon>
        <taxon>Galliformes</taxon>
        <taxon>Phasianidae</taxon>
        <taxon>Phasianinae</taxon>
        <taxon>Lophophorus</taxon>
    </lineage>
</organism>
<comment type="subcellular location">
    <subcellularLocation>
        <location>Secreted</location>
    </subcellularLocation>
</comment>
<comment type="domain">
    <text>Avian ovomucoid consists of three homologous, tandem Kazal family inhibitory domains.</text>
</comment>